<dbReference type="EMBL" id="HQ396161">
    <property type="protein sequence ID" value="ADZ06147.1"/>
    <property type="molecule type" value="Genomic_DNA"/>
</dbReference>
<dbReference type="EMBL" id="JZEE01000036">
    <property type="protein sequence ID" value="KJK68567.1"/>
    <property type="molecule type" value="Genomic_DNA"/>
</dbReference>
<dbReference type="SMR" id="A0A0F0IP79"/>
<dbReference type="STRING" id="1403190.A0A0F0IP79"/>
<dbReference type="OrthoDB" id="295274at2759"/>
<dbReference type="Proteomes" id="UP000033540">
    <property type="component" value="Unassembled WGS sequence"/>
</dbReference>
<dbReference type="GO" id="GO:0005634">
    <property type="term" value="C:nucleus"/>
    <property type="evidence" value="ECO:0007669"/>
    <property type="project" value="UniProtKB-SubCell"/>
</dbReference>
<dbReference type="GO" id="GO:0003677">
    <property type="term" value="F:DNA binding"/>
    <property type="evidence" value="ECO:0007669"/>
    <property type="project" value="UniProtKB-KW"/>
</dbReference>
<dbReference type="GO" id="GO:0003700">
    <property type="term" value="F:DNA-binding transcription factor activity"/>
    <property type="evidence" value="ECO:0007669"/>
    <property type="project" value="InterPro"/>
</dbReference>
<dbReference type="GO" id="GO:1900179">
    <property type="term" value="P:positive regulation of aflatoxin biosynthetic process"/>
    <property type="evidence" value="ECO:0000314"/>
    <property type="project" value="GO_Central"/>
</dbReference>
<dbReference type="CDD" id="cd14687">
    <property type="entry name" value="bZIP_ATF2"/>
    <property type="match status" value="1"/>
</dbReference>
<dbReference type="FunFam" id="1.20.5.170:FF:000053">
    <property type="entry name" value="BZIP transcription factor AtfA"/>
    <property type="match status" value="1"/>
</dbReference>
<dbReference type="Gene3D" id="1.20.5.170">
    <property type="match status" value="1"/>
</dbReference>
<dbReference type="InterPro" id="IPR004827">
    <property type="entry name" value="bZIP"/>
</dbReference>
<dbReference type="InterPro" id="IPR046347">
    <property type="entry name" value="bZIP_sf"/>
</dbReference>
<dbReference type="InterPro" id="IPR051027">
    <property type="entry name" value="bZIP_transcription_factors"/>
</dbReference>
<dbReference type="PANTHER" id="PTHR19304">
    <property type="entry name" value="CYCLIC-AMP RESPONSE ELEMENT BINDING PROTEIN"/>
    <property type="match status" value="1"/>
</dbReference>
<dbReference type="Pfam" id="PF00170">
    <property type="entry name" value="bZIP_1"/>
    <property type="match status" value="1"/>
</dbReference>
<dbReference type="SMART" id="SM00338">
    <property type="entry name" value="BRLZ"/>
    <property type="match status" value="1"/>
</dbReference>
<dbReference type="SUPFAM" id="SSF57959">
    <property type="entry name" value="Leucine zipper domain"/>
    <property type="match status" value="1"/>
</dbReference>
<dbReference type="PROSITE" id="PS50217">
    <property type="entry name" value="BZIP"/>
    <property type="match status" value="1"/>
</dbReference>
<dbReference type="PROSITE" id="PS00036">
    <property type="entry name" value="BZIP_BASIC"/>
    <property type="match status" value="1"/>
</dbReference>
<gene>
    <name evidence="6" type="primary">atfB</name>
    <name type="ORF">P875_00075906</name>
</gene>
<feature type="chain" id="PRO_0000444003" description="Basic leucine zipper (bZIP) transcription factor atfB">
    <location>
        <begin position="1"/>
        <end position="318"/>
    </location>
</feature>
<feature type="domain" description="bZIP" evidence="1">
    <location>
        <begin position="160"/>
        <end position="223"/>
    </location>
</feature>
<feature type="region of interest" description="Disordered" evidence="2">
    <location>
        <begin position="79"/>
        <end position="100"/>
    </location>
</feature>
<feature type="region of interest" description="Disordered" evidence="2">
    <location>
        <begin position="114"/>
        <end position="164"/>
    </location>
</feature>
<feature type="region of interest" description="Basic motif" evidence="1">
    <location>
        <begin position="160"/>
        <end position="199"/>
    </location>
</feature>
<feature type="region of interest" description="Leucine-zipper" evidence="1">
    <location>
        <begin position="202"/>
        <end position="216"/>
    </location>
</feature>
<feature type="region of interest" description="Disordered" evidence="2">
    <location>
        <begin position="247"/>
        <end position="304"/>
    </location>
</feature>
<feature type="sequence conflict" description="In Ref. 1; ADZ06147." evidence="7" ref="1">
    <original>T</original>
    <variation>S</variation>
    <location>
        <position position="308"/>
    </location>
</feature>
<sequence length="318" mass="35873">MSVDQTLYSRARAAMADPTCAGPATFTAAGAFSQPDLMAFSLPEEEPIWGFDTIAPSMASWQGKMEQQTFCNPNMERGLKNTHVRNGQPTPPPFDDKKLQTPMGEMYPVAQYAFNSSPPEYAPPKHRSSLSEQSQTDGYGVSTRRRKASAVDQSEQQQDREKREKFLERNRLAASKCRQKKKEHTKLLETRFREVSSKKGELESEIEHLRSEVLNLKNEMLRHAQCGDEAIKIHLAQMVRLITSKDTPNRDLVSPMRSPEQMTASTPHGLSFGFDGPMQLPSEMGSPLDQRRDSEQSIMTESSYTFSTDDSFEELINV</sequence>
<keyword id="KW-0238">DNA-binding</keyword>
<keyword id="KW-0539">Nucleus</keyword>
<keyword id="KW-1185">Reference proteome</keyword>
<keyword id="KW-0346">Stress response</keyword>
<keyword id="KW-0804">Transcription</keyword>
<keyword id="KW-0805">Transcription regulation</keyword>
<organism>
    <name type="scientific">Aspergillus parasiticus (strain ATCC 56775 / NRRL 5862 / SRRC 143 / SU-1)</name>
    <dbReference type="NCBI Taxonomy" id="1403190"/>
    <lineage>
        <taxon>Eukaryota</taxon>
        <taxon>Fungi</taxon>
        <taxon>Dikarya</taxon>
        <taxon>Ascomycota</taxon>
        <taxon>Pezizomycotina</taxon>
        <taxon>Eurotiomycetes</taxon>
        <taxon>Eurotiomycetidae</taxon>
        <taxon>Eurotiales</taxon>
        <taxon>Aspergillaceae</taxon>
        <taxon>Aspergillus</taxon>
        <taxon>Aspergillus subgen. Circumdati</taxon>
    </lineage>
</organism>
<evidence type="ECO:0000255" key="1">
    <source>
        <dbReference type="PROSITE-ProRule" id="PRU00978"/>
    </source>
</evidence>
<evidence type="ECO:0000256" key="2">
    <source>
        <dbReference type="SAM" id="MobiDB-lite"/>
    </source>
</evidence>
<evidence type="ECO:0000269" key="3">
    <source>
    </source>
</evidence>
<evidence type="ECO:0000269" key="4">
    <source>
    </source>
</evidence>
<evidence type="ECO:0000269" key="5">
    <source>
    </source>
</evidence>
<evidence type="ECO:0000303" key="6">
    <source>
    </source>
</evidence>
<evidence type="ECO:0000305" key="7"/>
<name>ATFB_ASPPU</name>
<proteinExistence type="evidence at protein level"/>
<accession>A0A0F0IP79</accession>
<accession>F1CLM8</accession>
<reference key="1">
    <citation type="journal article" date="2011" name="J. Biol. Chem.">
        <title>Stress-related transcription factor AtfB integrates secondary metabolism with oxidative stress response in aspergilli.</title>
        <authorList>
            <person name="Roze L.V."/>
            <person name="Chanda A."/>
            <person name="Wee J."/>
            <person name="Awad D."/>
            <person name="Linz J.E."/>
        </authorList>
    </citation>
    <scope>NUCLEOTIDE SEQUENCE [GENOMIC DNA]</scope>
    <scope>FUNCTION</scope>
    <scope>DNA-BINDING</scope>
    <source>
        <strain>ATCC 56775 / NRRL 5862 / SRRC 143 / SU-1</strain>
    </source>
</reference>
<reference key="2">
    <citation type="submission" date="2015-02" db="EMBL/GenBank/DDBJ databases">
        <title>Draft genome sequence of Aspergillus parasiticus SU-1.</title>
        <authorList>
            <person name="Yu J."/>
            <person name="Fedorova N."/>
            <person name="Yin Y."/>
            <person name="Losada L."/>
            <person name="Zafar N."/>
            <person name="Taujale R."/>
            <person name="Ehrlich K.C."/>
            <person name="Bhatnagar D."/>
            <person name="Cleveland T.E."/>
            <person name="Bennett J.W."/>
            <person name="Nierman W.C."/>
        </authorList>
    </citation>
    <scope>NUCLEOTIDE SEQUENCE [LARGE SCALE GENOMIC DNA]</scope>
    <source>
        <strain>ATCC 56775 / NRRL 5862 / SRRC 143 / SU-1</strain>
    </source>
</reference>
<reference key="3">
    <citation type="journal article" date="2013" name="MicrobiologyOpen">
        <title>Evidence that a transcription factor regulatory network coordinates oxidative stress response and secondary metabolism in aspergilli.</title>
        <authorList>
            <person name="Hong S.Y."/>
            <person name="Roze L.V."/>
            <person name="Wee J."/>
            <person name="Linz J.E."/>
        </authorList>
    </citation>
    <scope>FUNCTION</scope>
</reference>
<reference key="4">
    <citation type="journal article" date="2017" name="Toxins">
        <title>The fungal bZIP transcription factor AtfB controls virulence-associated processes in Aspergillus parasiticus.</title>
        <authorList>
            <person name="Wee J."/>
            <person name="Hong S.Y."/>
            <person name="Roze L.V."/>
            <person name="Day D.M."/>
            <person name="Chanda A."/>
            <person name="Linz J.E."/>
        </authorList>
    </citation>
    <scope>FUNCTION</scope>
    <scope>DISRUPTION PHENOTYPE</scope>
</reference>
<comment type="function">
    <text evidence="3 4 5">Transcription factor that acts as a key player in the regulatory circuit that integrates secondary metabolism and cellular response to oxidative stress (PubMed:21808056). Regulates the genes involved in development, stress response, and secondary metabolism through direct binding to their promoters (PubMed:23281343, PubMed:28926946). Particularly involved in the resistance to oxidative stress in asexual conidiospores (PubMed:23281343). Binds aflatoxin gene promoters carrying the cAMP-response element (CRE1) under aflatoxin-inducing conditions (PubMed:21808056, PubMed:23281343).</text>
</comment>
<comment type="subcellular location">
    <subcellularLocation>
        <location evidence="1">Nucleus</location>
    </subcellularLocation>
</comment>
<comment type="disruption phenotype">
    <text evidence="5">Leads to a decrease in aflatoxin enzyme levels, down-regulation of aflatoxin accumulation, and impaired conidiospore development (PubMed:28926946).</text>
</comment>
<comment type="similarity">
    <text evidence="7">Belongs to the bZIP family. ATF subfamily.</text>
</comment>
<protein>
    <recommendedName>
        <fullName evidence="6">Basic leucine zipper (bZIP) transcription factor atfB</fullName>
    </recommendedName>
</protein>